<sequence length="494" mass="53038">MDMHCKADPFSAMHRHGGVNQLGGVFVNGRPLPDVVRQRIVELAHQGVRPCDISRQLRVSHGCVSKILGRYYETGSIKPGVIGGSKPKVATPKVVDKIADYKRQNPTMFAWEIRDRLLAEGICDNDTVPSVSSINRIIRTKVQQPFHPTPDGTPVSTPGHTLVPSTASPPVSSASNDPVGSYSINGILGIPRSNGEKRKRDEDGSDGSGPNGDSQSSVESLRKHLRADNFTQQQLEALDRVFERPSYPDVFQSAEHIKSEQASEYSLPALTPGLDEVKSSLSASGNADLGSNVSGPQSYPVVTESFASHLYLKQEPHEASLTPFTPSSLASSGLADIQPFQMALTVDASTPTYSSFTHHGPPYGQFGSQPLIAGRDMSSTTLPGYPPHVPPTGQGSYPTSTLAGMVPGTNVSVHHSVQPVECCSCLSSSKPCLFHCRTGSGSEFSGNPYSHPQYTTYNEAWRFSNPALLSSPYYYSATSRGSAPPTAATAYDRH</sequence>
<name>PAX2B_XENLA</name>
<evidence type="ECO:0000250" key="1">
    <source>
        <dbReference type="UniProtKB" id="Q02962"/>
    </source>
</evidence>
<evidence type="ECO:0000255" key="2">
    <source>
        <dbReference type="PROSITE-ProRule" id="PRU00381"/>
    </source>
</evidence>
<evidence type="ECO:0000256" key="3">
    <source>
        <dbReference type="SAM" id="MobiDB-lite"/>
    </source>
</evidence>
<evidence type="ECO:0000269" key="4">
    <source>
    </source>
</evidence>
<evidence type="ECO:0000269" key="5">
    <source>
    </source>
</evidence>
<evidence type="ECO:0000269" key="6">
    <source>
    </source>
</evidence>
<evidence type="ECO:0000269" key="7">
    <source>
    </source>
</evidence>
<evidence type="ECO:0000269" key="8">
    <source>
    </source>
</evidence>
<evidence type="ECO:0000303" key="9">
    <source>
    </source>
</evidence>
<evidence type="ECO:0000303" key="10">
    <source ref="3"/>
</evidence>
<evidence type="ECO:0000305" key="11"/>
<evidence type="ECO:0000312" key="12">
    <source>
        <dbReference type="EMBL" id="AAD52680.1"/>
    </source>
</evidence>
<evidence type="ECO:0000312" key="13">
    <source>
        <dbReference type="EMBL" id="AAH77463.1"/>
    </source>
</evidence>
<evidence type="ECO:0000312" key="14">
    <source>
        <dbReference type="EMBL" id="CAA71206.1"/>
    </source>
</evidence>
<protein>
    <recommendedName>
        <fullName>Paired box protein Pax-2-B</fullName>
        <shortName>xPax-2b</shortName>
    </recommendedName>
</protein>
<organism>
    <name type="scientific">Xenopus laevis</name>
    <name type="common">African clawed frog</name>
    <dbReference type="NCBI Taxonomy" id="8355"/>
    <lineage>
        <taxon>Eukaryota</taxon>
        <taxon>Metazoa</taxon>
        <taxon>Chordata</taxon>
        <taxon>Craniata</taxon>
        <taxon>Vertebrata</taxon>
        <taxon>Euteleostomi</taxon>
        <taxon>Amphibia</taxon>
        <taxon>Batrachia</taxon>
        <taxon>Anura</taxon>
        <taxon>Pipoidea</taxon>
        <taxon>Pipidae</taxon>
        <taxon>Xenopodinae</taxon>
        <taxon>Xenopus</taxon>
        <taxon>Xenopus</taxon>
    </lineage>
</organism>
<reference evidence="11 14" key="1">
    <citation type="journal article" date="1997" name="Mech. Dev.">
        <title>Xenopus Pax-2 displays multiple splice forms during embryogenesis and pronephric kidney development.</title>
        <authorList>
            <person name="Heller N."/>
            <person name="Braendli A.W."/>
        </authorList>
    </citation>
    <scope>NUCLEOTIDE SEQUENCE [MRNA] (ISOFORMS 2 AND 3)</scope>
    <scope>TISSUE SPECIFICITY</scope>
    <scope>DEVELOPMENTAL STAGE</scope>
    <scope>INDUCTION</scope>
    <source>
        <tissue evidence="14">Embryonic head</tissue>
        <tissue evidence="8">Embryonic kidney</tissue>
    </source>
</reference>
<reference evidence="11 12" key="2">
    <citation type="journal article" date="1999" name="Dev. Biol.">
        <title>Synergism between Pax-8 and lim-1 in embryonic kidney development.</title>
        <authorList>
            <person name="Carroll T.J."/>
            <person name="Vize P.D."/>
        </authorList>
    </citation>
    <scope>NUCLEOTIDE SEQUENCE [MRNA] (ISOFORM 1)</scope>
    <scope>FUNCTION</scope>
    <scope>TISSUE SPECIFICITY</scope>
    <source>
        <tissue evidence="6">Embryo</tissue>
    </source>
</reference>
<reference evidence="11 13" key="3">
    <citation type="submission" date="2004-07" db="EMBL/GenBank/DDBJ databases">
        <authorList>
            <consortium name="NIH - Xenopus Gene Collection (XGC) project"/>
        </authorList>
    </citation>
    <scope>NUCLEOTIDE SEQUENCE [LARGE SCALE MRNA] (ISOFORM 4)</scope>
    <source>
        <tissue evidence="13">Embryo</tissue>
    </source>
</reference>
<reference evidence="11" key="4">
    <citation type="journal article" date="1999" name="Dev. Genet.">
        <title>Xenopus Pax-2/5/8 orthologues: novel insights into Pax gene evolution and identification of Pax-8 as the earliest marker for otic and pronephric cell lineages.</title>
        <authorList>
            <person name="Heller N."/>
            <person name="Braendli A.W."/>
        </authorList>
    </citation>
    <scope>TISSUE SPECIFICITY</scope>
</reference>
<reference evidence="11" key="5">
    <citation type="journal article" date="2004" name="Dev. Biol.">
        <title>Molecular anatomy of placode development in Xenopus laevis.</title>
        <authorList>
            <person name="Schlosser G."/>
            <person name="Ahrens K."/>
        </authorList>
    </citation>
    <scope>TISSUE SPECIFICITY</scope>
</reference>
<reference evidence="11" key="6">
    <citation type="journal article" date="1999" name="Dev. Genet.">
        <title>Dynamic patterns of gene expression in the developing pronephros of Xenopus laevis.</title>
        <authorList>
            <person name="Carroll T.J."/>
            <person name="Wallingford J.B."/>
            <person name="Vize P.D."/>
        </authorList>
    </citation>
    <scope>TISSUE SPECIFICITY</scope>
</reference>
<accession>O57682</accession>
<accession>O57678</accession>
<accession>Q6AZQ6</accession>
<accession>Q9PUK6</accession>
<gene>
    <name type="primary">pax2-b</name>
    <name type="synonym">pax-2B</name>
</gene>
<dbReference type="EMBL" id="Y10120">
    <property type="protein sequence ID" value="CAA71206.1"/>
    <property type="molecule type" value="mRNA"/>
</dbReference>
<dbReference type="EMBL" id="AJ000668">
    <property type="protein sequence ID" value="CAA04224.1"/>
    <property type="molecule type" value="mRNA"/>
</dbReference>
<dbReference type="EMBL" id="AF179300">
    <property type="protein sequence ID" value="AAD52680.1"/>
    <property type="status" value="ALT_FRAME"/>
    <property type="molecule type" value="mRNA"/>
</dbReference>
<dbReference type="EMBL" id="BC077463">
    <property type="protein sequence ID" value="AAH77463.1"/>
    <property type="molecule type" value="mRNA"/>
</dbReference>
<dbReference type="RefSeq" id="XP_018083072.1">
    <molecule id="O57682-2"/>
    <property type="nucleotide sequence ID" value="XM_018227583.1"/>
</dbReference>
<dbReference type="SMR" id="O57682"/>
<dbReference type="GeneID" id="108697493"/>
<dbReference type="KEGG" id="xla:108697493"/>
<dbReference type="OrthoDB" id="3225452at2759"/>
<dbReference type="Proteomes" id="UP000186698">
    <property type="component" value="Chromosome 7S"/>
</dbReference>
<dbReference type="Bgee" id="108697493">
    <property type="expression patterns" value="Expressed in kidney and 3 other cell types or tissues"/>
</dbReference>
<dbReference type="GO" id="GO:0005634">
    <property type="term" value="C:nucleus"/>
    <property type="evidence" value="ECO:0000250"/>
    <property type="project" value="UniProtKB"/>
</dbReference>
<dbReference type="GO" id="GO:0003677">
    <property type="term" value="F:DNA binding"/>
    <property type="evidence" value="ECO:0000250"/>
    <property type="project" value="UniProtKB"/>
</dbReference>
<dbReference type="GO" id="GO:0000981">
    <property type="term" value="F:DNA-binding transcription factor activity, RNA polymerase II-specific"/>
    <property type="evidence" value="ECO:0000318"/>
    <property type="project" value="GO_Central"/>
</dbReference>
<dbReference type="GO" id="GO:0000978">
    <property type="term" value="F:RNA polymerase II cis-regulatory region sequence-specific DNA binding"/>
    <property type="evidence" value="ECO:0000318"/>
    <property type="project" value="GO_Central"/>
</dbReference>
<dbReference type="GO" id="GO:0000122">
    <property type="term" value="P:negative regulation of transcription by RNA polymerase II"/>
    <property type="evidence" value="ECO:0000250"/>
    <property type="project" value="UniProtKB"/>
</dbReference>
<dbReference type="GO" id="GO:0007399">
    <property type="term" value="P:nervous system development"/>
    <property type="evidence" value="ECO:0000318"/>
    <property type="project" value="GO_Central"/>
</dbReference>
<dbReference type="GO" id="GO:0045944">
    <property type="term" value="P:positive regulation of transcription by RNA polymerase II"/>
    <property type="evidence" value="ECO:0000250"/>
    <property type="project" value="UniProtKB"/>
</dbReference>
<dbReference type="GO" id="GO:0048793">
    <property type="term" value="P:pronephros development"/>
    <property type="evidence" value="ECO:0000316"/>
    <property type="project" value="UniProtKB"/>
</dbReference>
<dbReference type="GO" id="GO:0006357">
    <property type="term" value="P:regulation of transcription by RNA polymerase II"/>
    <property type="evidence" value="ECO:0000318"/>
    <property type="project" value="GO_Central"/>
</dbReference>
<dbReference type="GO" id="GO:0007367">
    <property type="term" value="P:segment polarity determination"/>
    <property type="evidence" value="ECO:0007669"/>
    <property type="project" value="UniProtKB-KW"/>
</dbReference>
<dbReference type="GO" id="GO:0007423">
    <property type="term" value="P:sensory organ development"/>
    <property type="evidence" value="ECO:0000318"/>
    <property type="project" value="GO_Central"/>
</dbReference>
<dbReference type="CDD" id="cd00131">
    <property type="entry name" value="PAX"/>
    <property type="match status" value="1"/>
</dbReference>
<dbReference type="FunFam" id="1.10.10.10:FF:000013">
    <property type="entry name" value="Paired box 8 isoform 1"/>
    <property type="match status" value="1"/>
</dbReference>
<dbReference type="FunFam" id="1.10.10.10:FF:000003">
    <property type="entry name" value="Paired box protein Pax-6"/>
    <property type="match status" value="1"/>
</dbReference>
<dbReference type="Gene3D" id="1.10.10.10">
    <property type="entry name" value="Winged helix-like DNA-binding domain superfamily/Winged helix DNA-binding domain"/>
    <property type="match status" value="2"/>
</dbReference>
<dbReference type="InterPro" id="IPR009057">
    <property type="entry name" value="Homeodomain-like_sf"/>
</dbReference>
<dbReference type="InterPro" id="IPR043182">
    <property type="entry name" value="PAIRED_DNA-bd_dom"/>
</dbReference>
<dbReference type="InterPro" id="IPR001523">
    <property type="entry name" value="Paired_dom"/>
</dbReference>
<dbReference type="InterPro" id="IPR022130">
    <property type="entry name" value="Pax2_C"/>
</dbReference>
<dbReference type="InterPro" id="IPR043565">
    <property type="entry name" value="PAX_fam"/>
</dbReference>
<dbReference type="InterPro" id="IPR036388">
    <property type="entry name" value="WH-like_DNA-bd_sf"/>
</dbReference>
<dbReference type="PANTHER" id="PTHR45636:SF19">
    <property type="entry name" value="PAIRED BOX PROTEIN PAX-2"/>
    <property type="match status" value="1"/>
</dbReference>
<dbReference type="PANTHER" id="PTHR45636">
    <property type="entry name" value="PAIRED BOX PROTEIN PAX-6-RELATED-RELATED"/>
    <property type="match status" value="1"/>
</dbReference>
<dbReference type="Pfam" id="PF00292">
    <property type="entry name" value="PAX"/>
    <property type="match status" value="1"/>
</dbReference>
<dbReference type="Pfam" id="PF12403">
    <property type="entry name" value="Pax2_C"/>
    <property type="match status" value="2"/>
</dbReference>
<dbReference type="PRINTS" id="PR00027">
    <property type="entry name" value="PAIREDBOX"/>
</dbReference>
<dbReference type="SMART" id="SM00351">
    <property type="entry name" value="PAX"/>
    <property type="match status" value="1"/>
</dbReference>
<dbReference type="SUPFAM" id="SSF46689">
    <property type="entry name" value="Homeodomain-like"/>
    <property type="match status" value="1"/>
</dbReference>
<dbReference type="PROSITE" id="PS00034">
    <property type="entry name" value="PAIRED_1"/>
    <property type="match status" value="1"/>
</dbReference>
<dbReference type="PROSITE" id="PS51057">
    <property type="entry name" value="PAIRED_2"/>
    <property type="match status" value="1"/>
</dbReference>
<feature type="chain" id="PRO_0000289133" description="Paired box protein Pax-2-B">
    <location>
        <begin position="1"/>
        <end position="494"/>
    </location>
</feature>
<feature type="DNA-binding region" description="Paired" evidence="2">
    <location>
        <begin position="15"/>
        <end position="141"/>
    </location>
</feature>
<feature type="region of interest" description="PAI subdomain" evidence="2">
    <location>
        <begin position="18"/>
        <end position="74"/>
    </location>
</feature>
<feature type="region of interest" description="RED subdomain" evidence="2">
    <location>
        <begin position="93"/>
        <end position="141"/>
    </location>
</feature>
<feature type="region of interest" description="Disordered" evidence="3">
    <location>
        <begin position="142"/>
        <end position="221"/>
    </location>
</feature>
<feature type="compositionally biased region" description="Low complexity" evidence="3">
    <location>
        <begin position="163"/>
        <end position="175"/>
    </location>
</feature>
<feature type="splice variant" id="VSP_052441" description="In isoform 2 and isoform 4." evidence="9 10">
    <original>R</original>
    <variation>PG</variation>
    <location>
        <position position="15"/>
    </location>
</feature>
<feature type="splice variant" id="VSP_052442" description="In isoform 3 and isoform 4." evidence="9 10">
    <location>
        <begin position="203"/>
        <end position="373"/>
    </location>
</feature>
<feature type="splice variant" id="VSP_052443" description="In isoform 2, isoform 3 and isoform 4." evidence="9 10">
    <location>
        <begin position="408"/>
        <end position="440"/>
    </location>
</feature>
<proteinExistence type="evidence at transcript level"/>
<comment type="function">
    <text evidence="6">Probable transcription factor. Involved in kidney development, acting synergistically with lhx1/lim-1 in pronephric morphogenesis during the tailbud stages.</text>
</comment>
<comment type="subcellular location">
    <subcellularLocation>
        <location evidence="1 2">Nucleus</location>
    </subcellularLocation>
</comment>
<comment type="alternative products">
    <event type="alternative splicing"/>
    <isoform>
        <id>O57682-1</id>
        <name>1</name>
        <name evidence="6">12</name>
        <sequence type="displayed"/>
    </isoform>
    <isoform>
        <id>O57682-2</id>
        <name evidence="8">2</name>
        <sequence type="described" ref="VSP_052441 VSP_052443"/>
    </isoform>
    <isoform>
        <id>O57682-3</id>
        <name>3</name>
        <name evidence="8">8</name>
        <sequence type="described" ref="VSP_052442 VSP_052443"/>
    </isoform>
    <isoform>
        <id>O57682-4</id>
        <name>4</name>
        <name>11</name>
        <sequence type="described" ref="VSP_052441 VSP_052442 VSP_052443"/>
    </isoform>
</comment>
<comment type="tissue specificity">
    <text evidence="4 5 6 7 8">Expression becomes spatially localized at mid-gastrula stages and is localized to the nervous system (midbrain, hindbrain, spinal cord), sensory organs (optic vesicle and stalk, otic vesicle), visceral arches, developing excretory system (pronephros, pronephric duct, rectal diverticulum, proctodaeum) and thryoid gland. Splicing does not appear to be tissue-specific.</text>
</comment>
<comment type="developmental stage">
    <text evidence="8">Splicing is temporally regulated. Isoform 3 is expressed both maternally and zygotically, whereas isoform 2 is exclusively zygotic. Expression is highest in embryos from stage 12 on, with expression levels remaining constant throughout embryogenesis.</text>
</comment>
<comment type="induction">
    <text evidence="8">By activin. Weakly by bFGF.</text>
</comment>
<comment type="sequence caution" evidence="11">
    <conflict type="frameshift">
        <sequence resource="EMBL-CDS" id="AAD52680"/>
    </conflict>
</comment>
<keyword id="KW-0025">Alternative splicing</keyword>
<keyword id="KW-0217">Developmental protein</keyword>
<keyword id="KW-0238">DNA-binding</keyword>
<keyword id="KW-0539">Nucleus</keyword>
<keyword id="KW-0563">Paired box</keyword>
<keyword id="KW-1185">Reference proteome</keyword>
<keyword id="KW-0709">Segmentation polarity protein</keyword>
<keyword id="KW-0804">Transcription</keyword>
<keyword id="KW-0805">Transcription regulation</keyword>